<proteinExistence type="evidence at protein level"/>
<reference key="1">
    <citation type="journal article" date="1997" name="Nature">
        <title>The complete genome sequence of the Gram-positive bacterium Bacillus subtilis.</title>
        <authorList>
            <person name="Kunst F."/>
            <person name="Ogasawara N."/>
            <person name="Moszer I."/>
            <person name="Albertini A.M."/>
            <person name="Alloni G."/>
            <person name="Azevedo V."/>
            <person name="Bertero M.G."/>
            <person name="Bessieres P."/>
            <person name="Bolotin A."/>
            <person name="Borchert S."/>
            <person name="Borriss R."/>
            <person name="Boursier L."/>
            <person name="Brans A."/>
            <person name="Braun M."/>
            <person name="Brignell S.C."/>
            <person name="Bron S."/>
            <person name="Brouillet S."/>
            <person name="Bruschi C.V."/>
            <person name="Caldwell B."/>
            <person name="Capuano V."/>
            <person name="Carter N.M."/>
            <person name="Choi S.-K."/>
            <person name="Codani J.-J."/>
            <person name="Connerton I.F."/>
            <person name="Cummings N.J."/>
            <person name="Daniel R.A."/>
            <person name="Denizot F."/>
            <person name="Devine K.M."/>
            <person name="Duesterhoeft A."/>
            <person name="Ehrlich S.D."/>
            <person name="Emmerson P.T."/>
            <person name="Entian K.-D."/>
            <person name="Errington J."/>
            <person name="Fabret C."/>
            <person name="Ferrari E."/>
            <person name="Foulger D."/>
            <person name="Fritz C."/>
            <person name="Fujita M."/>
            <person name="Fujita Y."/>
            <person name="Fuma S."/>
            <person name="Galizzi A."/>
            <person name="Galleron N."/>
            <person name="Ghim S.-Y."/>
            <person name="Glaser P."/>
            <person name="Goffeau A."/>
            <person name="Golightly E.J."/>
            <person name="Grandi G."/>
            <person name="Guiseppi G."/>
            <person name="Guy B.J."/>
            <person name="Haga K."/>
            <person name="Haiech J."/>
            <person name="Harwood C.R."/>
            <person name="Henaut A."/>
            <person name="Hilbert H."/>
            <person name="Holsappel S."/>
            <person name="Hosono S."/>
            <person name="Hullo M.-F."/>
            <person name="Itaya M."/>
            <person name="Jones L.-M."/>
            <person name="Joris B."/>
            <person name="Karamata D."/>
            <person name="Kasahara Y."/>
            <person name="Klaerr-Blanchard M."/>
            <person name="Klein C."/>
            <person name="Kobayashi Y."/>
            <person name="Koetter P."/>
            <person name="Koningstein G."/>
            <person name="Krogh S."/>
            <person name="Kumano M."/>
            <person name="Kurita K."/>
            <person name="Lapidus A."/>
            <person name="Lardinois S."/>
            <person name="Lauber J."/>
            <person name="Lazarevic V."/>
            <person name="Lee S.-M."/>
            <person name="Levine A."/>
            <person name="Liu H."/>
            <person name="Masuda S."/>
            <person name="Mauel C."/>
            <person name="Medigue C."/>
            <person name="Medina N."/>
            <person name="Mellado R.P."/>
            <person name="Mizuno M."/>
            <person name="Moestl D."/>
            <person name="Nakai S."/>
            <person name="Noback M."/>
            <person name="Noone D."/>
            <person name="O'Reilly M."/>
            <person name="Ogawa K."/>
            <person name="Ogiwara A."/>
            <person name="Oudega B."/>
            <person name="Park S.-H."/>
            <person name="Parro V."/>
            <person name="Pohl T.M."/>
            <person name="Portetelle D."/>
            <person name="Porwollik S."/>
            <person name="Prescott A.M."/>
            <person name="Presecan E."/>
            <person name="Pujic P."/>
            <person name="Purnelle B."/>
            <person name="Rapoport G."/>
            <person name="Rey M."/>
            <person name="Reynolds S."/>
            <person name="Rieger M."/>
            <person name="Rivolta C."/>
            <person name="Rocha E."/>
            <person name="Roche B."/>
            <person name="Rose M."/>
            <person name="Sadaie Y."/>
            <person name="Sato T."/>
            <person name="Scanlan E."/>
            <person name="Schleich S."/>
            <person name="Schroeter R."/>
            <person name="Scoffone F."/>
            <person name="Sekiguchi J."/>
            <person name="Sekowska A."/>
            <person name="Seror S.J."/>
            <person name="Serror P."/>
            <person name="Shin B.-S."/>
            <person name="Soldo B."/>
            <person name="Sorokin A."/>
            <person name="Tacconi E."/>
            <person name="Takagi T."/>
            <person name="Takahashi H."/>
            <person name="Takemaru K."/>
            <person name="Takeuchi M."/>
            <person name="Tamakoshi A."/>
            <person name="Tanaka T."/>
            <person name="Terpstra P."/>
            <person name="Tognoni A."/>
            <person name="Tosato V."/>
            <person name="Uchiyama S."/>
            <person name="Vandenbol M."/>
            <person name="Vannier F."/>
            <person name="Vassarotti A."/>
            <person name="Viari A."/>
            <person name="Wambutt R."/>
            <person name="Wedler E."/>
            <person name="Wedler H."/>
            <person name="Weitzenegger T."/>
            <person name="Winters P."/>
            <person name="Wipat A."/>
            <person name="Yamamoto H."/>
            <person name="Yamane K."/>
            <person name="Yasumoto K."/>
            <person name="Yata K."/>
            <person name="Yoshida K."/>
            <person name="Yoshikawa H.-F."/>
            <person name="Zumstein E."/>
            <person name="Yoshikawa H."/>
            <person name="Danchin A."/>
        </authorList>
    </citation>
    <scope>NUCLEOTIDE SEQUENCE [LARGE SCALE GENOMIC DNA]</scope>
    <source>
        <strain>168</strain>
    </source>
</reference>
<reference key="2">
    <citation type="journal article" date="2002" name="J. Biol. Chem.">
        <title>Comparative genomics of thiamin biosynthesis in procaryotes. New genes and regulatory mechanisms.</title>
        <authorList>
            <person name="Rodionov D.A."/>
            <person name="Vitreschak A.G."/>
            <person name="Mironov A.A."/>
            <person name="Gelfand M.S."/>
        </authorList>
    </citation>
    <scope>IDENTIFICATION</scope>
    <scope>PRELIMINARY FUNCTION</scope>
</reference>
<reference key="3">
    <citation type="journal article" date="2005" name="J. Bacteriol.">
        <title>Isolation and characterization of new thiamine-deregulated mutants of Bacillus subtilis.</title>
        <authorList>
            <person name="Schyns G."/>
            <person name="Potot S."/>
            <person name="Geng Y."/>
            <person name="Barbosa T.M."/>
            <person name="Henriques A."/>
            <person name="Perkins J.B."/>
        </authorList>
    </citation>
    <scope>DISRUPTION PHENOTYPE</scope>
    <scope>FUNCTION IN THIAMINE TRANSPORT</scope>
</reference>
<evidence type="ECO:0000250" key="1"/>
<evidence type="ECO:0000255" key="2"/>
<evidence type="ECO:0000269" key="3">
    <source>
    </source>
</evidence>
<evidence type="ECO:0000305" key="4"/>
<accession>O32074</accession>
<comment type="function">
    <text evidence="1 3">Probably a thiamine-binding protein that interacts with the energy-coupling factor (ECF) ABC-transporter complex. Unlike classic ABC transporters this ECF transporter provides the energy necessary to transport a number of different substrates. The substrates themselves are bound by transmembrane, not extracytoplasmic soluble proteins (By similarity).</text>
</comment>
<comment type="subunit">
    <text evidence="1">Forms a stable energy-coupling factor (ECF) transporter complex composed of a membrane-embedded substrate-binding protein (S component), two ATP-binding proteins (A components) and a transmembrane protein (T component).</text>
</comment>
<comment type="subcellular location">
    <subcellularLocation>
        <location evidence="4">Cell membrane</location>
        <topology evidence="4">Multi-pass membrane protein</topology>
    </subcellularLocation>
</comment>
<comment type="disruption phenotype">
    <text evidence="3">Cells display deregulation of thiamine biosynthesis and impaired export of thiamine products from the cell.</text>
</comment>
<comment type="similarity">
    <text evidence="4">Belongs to the vitamin uptake transporter (VUT/ECF) (TC 2.A.88) family. Thiamine transporter subfamily.</text>
</comment>
<name>THIT_BACSU</name>
<organism>
    <name type="scientific">Bacillus subtilis (strain 168)</name>
    <dbReference type="NCBI Taxonomy" id="224308"/>
    <lineage>
        <taxon>Bacteria</taxon>
        <taxon>Bacillati</taxon>
        <taxon>Bacillota</taxon>
        <taxon>Bacilli</taxon>
        <taxon>Bacillales</taxon>
        <taxon>Bacillaceae</taxon>
        <taxon>Bacillus</taxon>
    </lineage>
</organism>
<dbReference type="EMBL" id="AL009126">
    <property type="protein sequence ID" value="CAB15077.1"/>
    <property type="molecule type" value="Genomic_DNA"/>
</dbReference>
<dbReference type="PIR" id="C70006">
    <property type="entry name" value="C70006"/>
</dbReference>
<dbReference type="RefSeq" id="NP_390977.1">
    <property type="nucleotide sequence ID" value="NC_000964.3"/>
</dbReference>
<dbReference type="RefSeq" id="WP_003228966.1">
    <property type="nucleotide sequence ID" value="NZ_OZ025638.1"/>
</dbReference>
<dbReference type="SMR" id="O32074"/>
<dbReference type="FunCoup" id="O32074">
    <property type="interactions" value="25"/>
</dbReference>
<dbReference type="STRING" id="224308.BSU30990"/>
<dbReference type="TCDB" id="2.A.88.3.1">
    <property type="family name" value="the vitamin uptake transporter (vut) family"/>
</dbReference>
<dbReference type="PaxDb" id="224308-BSU30990"/>
<dbReference type="EnsemblBacteria" id="CAB15077">
    <property type="protein sequence ID" value="CAB15077"/>
    <property type="gene ID" value="BSU_30990"/>
</dbReference>
<dbReference type="GeneID" id="937137"/>
<dbReference type="KEGG" id="bsu:BSU30990"/>
<dbReference type="PATRIC" id="fig|224308.179.peg.3359"/>
<dbReference type="eggNOG" id="COG3859">
    <property type="taxonomic scope" value="Bacteria"/>
</dbReference>
<dbReference type="InParanoid" id="O32074"/>
<dbReference type="OrthoDB" id="9795813at2"/>
<dbReference type="PhylomeDB" id="O32074"/>
<dbReference type="BioCyc" id="BSUB:BSU30990-MONOMER"/>
<dbReference type="Proteomes" id="UP000001570">
    <property type="component" value="Chromosome"/>
</dbReference>
<dbReference type="GO" id="GO:0005886">
    <property type="term" value="C:plasma membrane"/>
    <property type="evidence" value="ECO:0007669"/>
    <property type="project" value="UniProtKB-SubCell"/>
</dbReference>
<dbReference type="GO" id="GO:0015234">
    <property type="term" value="F:thiamine transmembrane transporter activity"/>
    <property type="evidence" value="ECO:0007669"/>
    <property type="project" value="InterPro"/>
</dbReference>
<dbReference type="Gene3D" id="1.10.1760.20">
    <property type="match status" value="1"/>
</dbReference>
<dbReference type="InterPro" id="IPR012651">
    <property type="entry name" value="Thia_Transptr_ThiT"/>
</dbReference>
<dbReference type="NCBIfam" id="TIGR02357">
    <property type="entry name" value="ECF_ThiT_YuaJ"/>
    <property type="match status" value="1"/>
</dbReference>
<dbReference type="Pfam" id="PF09515">
    <property type="entry name" value="Thia_YuaJ"/>
    <property type="match status" value="1"/>
</dbReference>
<protein>
    <recommendedName>
        <fullName>Thiamine transporter ThiT</fullName>
    </recommendedName>
    <alternativeName>
        <fullName>Thiamine ECF transporter S component ThiT</fullName>
    </alternativeName>
</protein>
<gene>
    <name type="primary">thiT</name>
    <name type="synonym">yuaJ</name>
    <name type="ordered locus">BSU30990</name>
</gene>
<keyword id="KW-1003">Cell membrane</keyword>
<keyword id="KW-0472">Membrane</keyword>
<keyword id="KW-1185">Reference proteome</keyword>
<keyword id="KW-0812">Transmembrane</keyword>
<keyword id="KW-1133">Transmembrane helix</keyword>
<keyword id="KW-0813">Transport</keyword>
<feature type="chain" id="PRO_0000360177" description="Thiamine transporter ThiT">
    <location>
        <begin position="1"/>
        <end position="192"/>
    </location>
</feature>
<feature type="transmembrane region" description="Helical" evidence="2">
    <location>
        <begin position="10"/>
        <end position="30"/>
    </location>
</feature>
<feature type="transmembrane region" description="Helical" evidence="2">
    <location>
        <begin position="31"/>
        <end position="51"/>
    </location>
</feature>
<feature type="transmembrane region" description="Helical" evidence="2">
    <location>
        <begin position="57"/>
        <end position="77"/>
    </location>
</feature>
<feature type="transmembrane region" description="Helical" evidence="2">
    <location>
        <begin position="81"/>
        <end position="101"/>
    </location>
</feature>
<feature type="transmembrane region" description="Helical" evidence="2">
    <location>
        <begin position="123"/>
        <end position="143"/>
    </location>
</feature>
<feature type="transmembrane region" description="Helical" evidence="2">
    <location>
        <begin position="164"/>
        <end position="184"/>
    </location>
</feature>
<sequence>MNQSKQLVRLIEIAIMTAAAVILDIVSGMFLSMPQGGSVSIMMIPIFLISFRWGVKAGLTTGLLTGLVQIAIGNLFAQHPVQLLLDYIVAFAAIGISGCFASSVRKAAVSKTKGKLIVSVVSAVFIGSLLRYAAHVISGAVFFGSFAPKGTPVWIYSLTYNATYMVPSFIICAIVLCLLFMTAPRLLKSDKA</sequence>